<accession>Q9I0K1</accession>
<proteinExistence type="inferred from homology"/>
<organism>
    <name type="scientific">Pseudomonas aeruginosa (strain ATCC 15692 / DSM 22644 / CIP 104116 / JCM 14847 / LMG 12228 / 1C / PRS 101 / PAO1)</name>
    <dbReference type="NCBI Taxonomy" id="208964"/>
    <lineage>
        <taxon>Bacteria</taxon>
        <taxon>Pseudomonadati</taxon>
        <taxon>Pseudomonadota</taxon>
        <taxon>Gammaproteobacteria</taxon>
        <taxon>Pseudomonadales</taxon>
        <taxon>Pseudomonadaceae</taxon>
        <taxon>Pseudomonas</taxon>
    </lineage>
</organism>
<gene>
    <name evidence="1" type="primary">nuoA2</name>
    <name type="ordered locus">PA2637</name>
</gene>
<feature type="chain" id="PRO_0000287834" description="NADH-quinone oxidoreductase subunit A 2">
    <location>
        <begin position="1"/>
        <end position="137"/>
    </location>
</feature>
<feature type="transmembrane region" description="Helical" evidence="1">
    <location>
        <begin position="12"/>
        <end position="32"/>
    </location>
</feature>
<feature type="transmembrane region" description="Helical" evidence="1">
    <location>
        <begin position="66"/>
        <end position="86"/>
    </location>
</feature>
<feature type="transmembrane region" description="Helical" evidence="1">
    <location>
        <begin position="95"/>
        <end position="115"/>
    </location>
</feature>
<sequence>MPNPAELAAHHWGFAAFLLGVVGLLAFMLGVSSLLGSKAFGRSKNEPFESGIVPTGGARLRLSAKFYLVAMLFVIFDVEALFLFAWSVSVRESGWAGLIEATIFIAILLAGLVYLWRIGALDWAPESRRKRQAKLKQ</sequence>
<dbReference type="EC" id="7.1.1.-" evidence="1"/>
<dbReference type="EMBL" id="AE004091">
    <property type="protein sequence ID" value="AAG06025.1"/>
    <property type="molecule type" value="Genomic_DNA"/>
</dbReference>
<dbReference type="PIR" id="B83316">
    <property type="entry name" value="B83316"/>
</dbReference>
<dbReference type="RefSeq" id="WP_003090452.1">
    <property type="nucleotide sequence ID" value="NZ_QZGE01000008.1"/>
</dbReference>
<dbReference type="SMR" id="Q9I0K1"/>
<dbReference type="FunCoup" id="Q9I0K1">
    <property type="interactions" value="220"/>
</dbReference>
<dbReference type="STRING" id="208964.PA2637"/>
<dbReference type="PaxDb" id="208964-PA2637"/>
<dbReference type="DNASU" id="882344"/>
<dbReference type="KEGG" id="pae:PA2637"/>
<dbReference type="PATRIC" id="fig|208964.12.peg.2759"/>
<dbReference type="PseudoCAP" id="PA2637"/>
<dbReference type="HOGENOM" id="CLU_119549_2_1_6"/>
<dbReference type="InParanoid" id="Q9I0K1"/>
<dbReference type="OrthoDB" id="9791970at2"/>
<dbReference type="PhylomeDB" id="Q9I0K1"/>
<dbReference type="BioCyc" id="PAER208964:G1FZ6-2677-MONOMER"/>
<dbReference type="Proteomes" id="UP000002438">
    <property type="component" value="Chromosome"/>
</dbReference>
<dbReference type="GO" id="GO:0005886">
    <property type="term" value="C:plasma membrane"/>
    <property type="evidence" value="ECO:0007669"/>
    <property type="project" value="UniProtKB-SubCell"/>
</dbReference>
<dbReference type="GO" id="GO:0045271">
    <property type="term" value="C:respiratory chain complex I"/>
    <property type="evidence" value="ECO:0000318"/>
    <property type="project" value="GO_Central"/>
</dbReference>
<dbReference type="GO" id="GO:0008137">
    <property type="term" value="F:NADH dehydrogenase (ubiquinone) activity"/>
    <property type="evidence" value="ECO:0000318"/>
    <property type="project" value="GO_Central"/>
</dbReference>
<dbReference type="GO" id="GO:0050136">
    <property type="term" value="F:NADH:ubiquinone reductase (non-electrogenic) activity"/>
    <property type="evidence" value="ECO:0007669"/>
    <property type="project" value="UniProtKB-UniRule"/>
</dbReference>
<dbReference type="GO" id="GO:0048038">
    <property type="term" value="F:quinone binding"/>
    <property type="evidence" value="ECO:0007669"/>
    <property type="project" value="UniProtKB-KW"/>
</dbReference>
<dbReference type="GO" id="GO:0071281">
    <property type="term" value="P:cellular response to iron ion"/>
    <property type="evidence" value="ECO:0000269"/>
    <property type="project" value="CollecTF"/>
</dbReference>
<dbReference type="FunFam" id="1.20.58.1610:FF:000003">
    <property type="entry name" value="NADH-quinone oxidoreductase subunit A"/>
    <property type="match status" value="1"/>
</dbReference>
<dbReference type="Gene3D" id="1.20.58.1610">
    <property type="entry name" value="NADH:ubiquinone/plastoquinone oxidoreductase, chain 3"/>
    <property type="match status" value="1"/>
</dbReference>
<dbReference type="HAMAP" id="MF_01394">
    <property type="entry name" value="NDH1_NuoA"/>
    <property type="match status" value="1"/>
</dbReference>
<dbReference type="InterPro" id="IPR023043">
    <property type="entry name" value="NAD(P)H_OxRDtase_bac/plastid"/>
</dbReference>
<dbReference type="InterPro" id="IPR000440">
    <property type="entry name" value="NADH_UbQ/plastoQ_OxRdtase_su3"/>
</dbReference>
<dbReference type="InterPro" id="IPR038430">
    <property type="entry name" value="NDAH_ubi_oxred_su3_sf"/>
</dbReference>
<dbReference type="PANTHER" id="PTHR11058:SF21">
    <property type="entry name" value="NADH-QUINONE OXIDOREDUCTASE SUBUNIT A"/>
    <property type="match status" value="1"/>
</dbReference>
<dbReference type="PANTHER" id="PTHR11058">
    <property type="entry name" value="NADH-UBIQUINONE OXIDOREDUCTASE CHAIN 3"/>
    <property type="match status" value="1"/>
</dbReference>
<dbReference type="Pfam" id="PF00507">
    <property type="entry name" value="Oxidored_q4"/>
    <property type="match status" value="1"/>
</dbReference>
<protein>
    <recommendedName>
        <fullName evidence="1">NADH-quinone oxidoreductase subunit A 2</fullName>
        <ecNumber evidence="1">7.1.1.-</ecNumber>
    </recommendedName>
    <alternativeName>
        <fullName evidence="1">NADH dehydrogenase I subunit A 2</fullName>
    </alternativeName>
    <alternativeName>
        <fullName evidence="1">NDH-1 subunit A 2</fullName>
    </alternativeName>
    <alternativeName>
        <fullName evidence="1">NUO1 2</fullName>
    </alternativeName>
</protein>
<evidence type="ECO:0000255" key="1">
    <source>
        <dbReference type="HAMAP-Rule" id="MF_01394"/>
    </source>
</evidence>
<keyword id="KW-0997">Cell inner membrane</keyword>
<keyword id="KW-1003">Cell membrane</keyword>
<keyword id="KW-0472">Membrane</keyword>
<keyword id="KW-0520">NAD</keyword>
<keyword id="KW-0874">Quinone</keyword>
<keyword id="KW-1185">Reference proteome</keyword>
<keyword id="KW-1278">Translocase</keyword>
<keyword id="KW-0812">Transmembrane</keyword>
<keyword id="KW-1133">Transmembrane helix</keyword>
<keyword id="KW-0813">Transport</keyword>
<keyword id="KW-0830">Ubiquinone</keyword>
<reference key="1">
    <citation type="journal article" date="2000" name="Nature">
        <title>Complete genome sequence of Pseudomonas aeruginosa PAO1, an opportunistic pathogen.</title>
        <authorList>
            <person name="Stover C.K."/>
            <person name="Pham X.-Q.T."/>
            <person name="Erwin A.L."/>
            <person name="Mizoguchi S.D."/>
            <person name="Warrener P."/>
            <person name="Hickey M.J."/>
            <person name="Brinkman F.S.L."/>
            <person name="Hufnagle W.O."/>
            <person name="Kowalik D.J."/>
            <person name="Lagrou M."/>
            <person name="Garber R.L."/>
            <person name="Goltry L."/>
            <person name="Tolentino E."/>
            <person name="Westbrock-Wadman S."/>
            <person name="Yuan Y."/>
            <person name="Brody L.L."/>
            <person name="Coulter S.N."/>
            <person name="Folger K.R."/>
            <person name="Kas A."/>
            <person name="Larbig K."/>
            <person name="Lim R.M."/>
            <person name="Smith K.A."/>
            <person name="Spencer D.H."/>
            <person name="Wong G.K.-S."/>
            <person name="Wu Z."/>
            <person name="Paulsen I.T."/>
            <person name="Reizer J."/>
            <person name="Saier M.H. Jr."/>
            <person name="Hancock R.E.W."/>
            <person name="Lory S."/>
            <person name="Olson M.V."/>
        </authorList>
    </citation>
    <scope>NUCLEOTIDE SEQUENCE [LARGE SCALE GENOMIC DNA]</scope>
    <source>
        <strain>ATCC 15692 / DSM 22644 / CIP 104116 / JCM 14847 / LMG 12228 / 1C / PRS 101 / PAO1</strain>
    </source>
</reference>
<name>NUOA2_PSEAE</name>
<comment type="function">
    <text evidence="1">NDH-1 shuttles electrons from NADH, via FMN and iron-sulfur (Fe-S) centers, to quinones in the respiratory chain. The immediate electron acceptor for the enzyme in this species is believed to be ubiquinone. Couples the redox reaction to proton translocation (for every two electrons transferred, four hydrogen ions are translocated across the cytoplasmic membrane), and thus conserves the redox energy in a proton gradient.</text>
</comment>
<comment type="catalytic activity">
    <reaction evidence="1">
        <text>a quinone + NADH + 5 H(+)(in) = a quinol + NAD(+) + 4 H(+)(out)</text>
        <dbReference type="Rhea" id="RHEA:57888"/>
        <dbReference type="ChEBI" id="CHEBI:15378"/>
        <dbReference type="ChEBI" id="CHEBI:24646"/>
        <dbReference type="ChEBI" id="CHEBI:57540"/>
        <dbReference type="ChEBI" id="CHEBI:57945"/>
        <dbReference type="ChEBI" id="CHEBI:132124"/>
    </reaction>
</comment>
<comment type="subunit">
    <text evidence="1">NDH-1 is composed of 13 different subunits. Subunits NuoA, H, J, K, L, M, N constitute the membrane sector of the complex.</text>
</comment>
<comment type="subcellular location">
    <subcellularLocation>
        <location evidence="1">Cell inner membrane</location>
        <topology evidence="1">Multi-pass membrane protein</topology>
    </subcellularLocation>
</comment>
<comment type="similarity">
    <text evidence="1">Belongs to the complex I subunit 3 family.</text>
</comment>